<accession>Q5RES3</accession>
<sequence>MAASRLPPATLTLKQFVRRQQVLLLYRRILQTIRQVPNDSDRKYLKDWAREEFKRNKSATEEDTIRMMITQGNMQLKELEKTLALAKS</sequence>
<reference key="1">
    <citation type="submission" date="2004-11" db="EMBL/GenBank/DDBJ databases">
        <authorList>
            <consortium name="The German cDNA consortium"/>
        </authorList>
    </citation>
    <scope>NUCLEOTIDE SEQUENCE [LARGE SCALE MRNA]</scope>
    <source>
        <tissue>Kidney</tissue>
    </source>
</reference>
<evidence type="ECO:0000250" key="1">
    <source>
        <dbReference type="UniProtKB" id="Q9NU23"/>
    </source>
</evidence>
<evidence type="ECO:0000255" key="2"/>
<evidence type="ECO:0000305" key="3"/>
<dbReference type="EMBL" id="CR857443">
    <property type="protein sequence ID" value="CAH89734.1"/>
    <property type="molecule type" value="mRNA"/>
</dbReference>
<dbReference type="RefSeq" id="NP_001124792.1">
    <property type="nucleotide sequence ID" value="NM_001131320.1"/>
</dbReference>
<dbReference type="SMR" id="Q5RES3"/>
<dbReference type="FunCoup" id="Q5RES3">
    <property type="interactions" value="995"/>
</dbReference>
<dbReference type="STRING" id="9601.ENSPPYP00000011073"/>
<dbReference type="Ensembl" id="ENSPPYT00000052024.1">
    <property type="protein sequence ID" value="ENSPPYP00000028005.1"/>
    <property type="gene ID" value="ENSPPYG00000040476.1"/>
</dbReference>
<dbReference type="GeneID" id="100937292"/>
<dbReference type="KEGG" id="pon:100937292"/>
<dbReference type="CTD" id="57226"/>
<dbReference type="eggNOG" id="ENOG502S8DG">
    <property type="taxonomic scope" value="Eukaryota"/>
</dbReference>
<dbReference type="GeneTree" id="ENSGT00390000002957"/>
<dbReference type="InParanoid" id="Q5RES3"/>
<dbReference type="OMA" id="YMRDWAR"/>
<dbReference type="OrthoDB" id="74240at2759"/>
<dbReference type="Proteomes" id="UP000001595">
    <property type="component" value="Chromosome 6"/>
</dbReference>
<dbReference type="GO" id="GO:0005739">
    <property type="term" value="C:mitochondrion"/>
    <property type="evidence" value="ECO:0007669"/>
    <property type="project" value="UniProtKB-SubCell"/>
</dbReference>
<dbReference type="GO" id="GO:0032981">
    <property type="term" value="P:mitochondrial respiratory chain complex I assembly"/>
    <property type="evidence" value="ECO:0000250"/>
    <property type="project" value="UniProtKB"/>
</dbReference>
<dbReference type="CDD" id="cd20262">
    <property type="entry name" value="Complex1_LYR_LYRM2"/>
    <property type="match status" value="1"/>
</dbReference>
<dbReference type="InterPro" id="IPR008011">
    <property type="entry name" value="Complex1_LYR_dom"/>
</dbReference>
<dbReference type="InterPro" id="IPR045293">
    <property type="entry name" value="Complex1_LYR_LYRM2"/>
</dbReference>
<dbReference type="PANTHER" id="PTHR13675">
    <property type="entry name" value="LYR MOTIF-CONTAINING PROTEIN 2"/>
    <property type="match status" value="1"/>
</dbReference>
<dbReference type="PANTHER" id="PTHR13675:SF3">
    <property type="entry name" value="LYR MOTIF-CONTAINING PROTEIN 2"/>
    <property type="match status" value="1"/>
</dbReference>
<dbReference type="Pfam" id="PF05347">
    <property type="entry name" value="Complex1_LYR"/>
    <property type="match status" value="1"/>
</dbReference>
<name>LYRM2_PONAB</name>
<gene>
    <name type="primary">LYRM2</name>
</gene>
<comment type="function">
    <text evidence="1">Involved in efficient integration of the N-module into mitochondrial respiratory chain complex I.</text>
</comment>
<comment type="subcellular location">
    <subcellularLocation>
        <location evidence="1">Mitochondrion</location>
    </subcellularLocation>
</comment>
<comment type="similarity">
    <text evidence="3">Belongs to the complex I LYR family.</text>
</comment>
<feature type="transit peptide" description="Mitochondrion" evidence="2">
    <location>
        <begin position="1"/>
        <end position="19"/>
    </location>
</feature>
<feature type="chain" id="PRO_0000251177" description="LYR motif-containing protein 2">
    <location>
        <begin position="20"/>
        <end position="88"/>
    </location>
</feature>
<organism>
    <name type="scientific">Pongo abelii</name>
    <name type="common">Sumatran orangutan</name>
    <name type="synonym">Pongo pygmaeus abelii</name>
    <dbReference type="NCBI Taxonomy" id="9601"/>
    <lineage>
        <taxon>Eukaryota</taxon>
        <taxon>Metazoa</taxon>
        <taxon>Chordata</taxon>
        <taxon>Craniata</taxon>
        <taxon>Vertebrata</taxon>
        <taxon>Euteleostomi</taxon>
        <taxon>Mammalia</taxon>
        <taxon>Eutheria</taxon>
        <taxon>Euarchontoglires</taxon>
        <taxon>Primates</taxon>
        <taxon>Haplorrhini</taxon>
        <taxon>Catarrhini</taxon>
        <taxon>Hominidae</taxon>
        <taxon>Pongo</taxon>
    </lineage>
</organism>
<keyword id="KW-0496">Mitochondrion</keyword>
<keyword id="KW-1185">Reference proteome</keyword>
<keyword id="KW-0809">Transit peptide</keyword>
<proteinExistence type="inferred from homology"/>
<protein>
    <recommendedName>
        <fullName>LYR motif-containing protein 2</fullName>
    </recommendedName>
</protein>